<feature type="chain" id="PRO_0000422527" description="Actin-related protein 2/3 complex subunit 1B">
    <location>
        <begin position="1"/>
        <end position="378"/>
    </location>
</feature>
<feature type="repeat" description="WD 1">
    <location>
        <begin position="8"/>
        <end position="47"/>
    </location>
</feature>
<feature type="repeat" description="WD 2">
    <location>
        <begin position="53"/>
        <end position="92"/>
    </location>
</feature>
<feature type="repeat" description="WD 3">
    <location>
        <begin position="97"/>
        <end position="138"/>
    </location>
</feature>
<feature type="repeat" description="WD 4">
    <location>
        <begin position="143"/>
        <end position="182"/>
    </location>
</feature>
<feature type="repeat" description="WD 5">
    <location>
        <begin position="203"/>
        <end position="242"/>
    </location>
</feature>
<feature type="repeat" description="WD 6">
    <location>
        <begin position="257"/>
        <end position="295"/>
    </location>
</feature>
<feature type="repeat" description="WD 7">
    <location>
        <begin position="331"/>
        <end position="375"/>
    </location>
</feature>
<feature type="region of interest" description="Disordered" evidence="2">
    <location>
        <begin position="319"/>
        <end position="340"/>
    </location>
</feature>
<comment type="function">
    <text evidence="1">Functions as a component of the Arp2/3 complex which is involved in regulation of actin polymerization and together with an activating nucleation-promoting factor (NPF) mediates the formation of branched actin networks. Arp2/3 complex plays a critical role in the control of cell morphogenesis via the modulation of cell polarity development.</text>
</comment>
<comment type="subunit">
    <text>Component of the Arp2/3 complex composed of ARP2, ARP3, ARPC1/p41-ARC, ARPC2/p34-ARC, ARPC3/p21-ARC, ARPC4/p20-ARC and ARPC5/p16-ARC.</text>
</comment>
<comment type="subcellular location">
    <subcellularLocation>
        <location evidence="1">Cytoplasm</location>
        <location evidence="1">Cytoskeleton</location>
    </subcellularLocation>
</comment>
<comment type="tissue specificity">
    <text evidence="3">Expressed at low levels in all tissues with a relatively highest expression in inflorescences.</text>
</comment>
<comment type="similarity">
    <text evidence="4">Belongs to the WD repeat ARPC1 family.</text>
</comment>
<name>ARC1B_ARATH</name>
<evidence type="ECO:0000250" key="1"/>
<evidence type="ECO:0000256" key="2">
    <source>
        <dbReference type="SAM" id="MobiDB-lite"/>
    </source>
</evidence>
<evidence type="ECO:0000269" key="3">
    <source>
    </source>
</evidence>
<evidence type="ECO:0000305" key="4"/>
<keyword id="KW-0009">Actin-binding</keyword>
<keyword id="KW-0963">Cytoplasm</keyword>
<keyword id="KW-0206">Cytoskeleton</keyword>
<keyword id="KW-1185">Reference proteome</keyword>
<keyword id="KW-0677">Repeat</keyword>
<keyword id="KW-0853">WD repeat</keyword>
<protein>
    <recommendedName>
        <fullName>Actin-related protein 2/3 complex subunit 1B</fullName>
    </recommendedName>
    <alternativeName>
        <fullName>Actin-related protein C1</fullName>
    </alternativeName>
    <alternativeName>
        <fullName>Actin-related protein C1B</fullName>
    </alternativeName>
    <alternativeName>
        <fullName>Arp2/3 complex 41 kDa subunit</fullName>
    </alternativeName>
    <alternativeName>
        <fullName>p41-ARC</fullName>
    </alternativeName>
</protein>
<organism>
    <name type="scientific">Arabidopsis thaliana</name>
    <name type="common">Mouse-ear cress</name>
    <dbReference type="NCBI Taxonomy" id="3702"/>
    <lineage>
        <taxon>Eukaryota</taxon>
        <taxon>Viridiplantae</taxon>
        <taxon>Streptophyta</taxon>
        <taxon>Embryophyta</taxon>
        <taxon>Tracheophyta</taxon>
        <taxon>Spermatophyta</taxon>
        <taxon>Magnoliopsida</taxon>
        <taxon>eudicotyledons</taxon>
        <taxon>Gunneridae</taxon>
        <taxon>Pentapetalae</taxon>
        <taxon>rosids</taxon>
        <taxon>malvids</taxon>
        <taxon>Brassicales</taxon>
        <taxon>Brassicaceae</taxon>
        <taxon>Camelineae</taxon>
        <taxon>Arabidopsis</taxon>
    </lineage>
</organism>
<reference key="1">
    <citation type="journal article" date="1999" name="Nature">
        <title>Sequence and analysis of chromosome 2 of the plant Arabidopsis thaliana.</title>
        <authorList>
            <person name="Lin X."/>
            <person name="Kaul S."/>
            <person name="Rounsley S.D."/>
            <person name="Shea T.P."/>
            <person name="Benito M.-I."/>
            <person name="Town C.D."/>
            <person name="Fujii C.Y."/>
            <person name="Mason T.M."/>
            <person name="Bowman C.L."/>
            <person name="Barnstead M.E."/>
            <person name="Feldblyum T.V."/>
            <person name="Buell C.R."/>
            <person name="Ketchum K.A."/>
            <person name="Lee J.J."/>
            <person name="Ronning C.M."/>
            <person name="Koo H.L."/>
            <person name="Moffat K.S."/>
            <person name="Cronin L.A."/>
            <person name="Shen M."/>
            <person name="Pai G."/>
            <person name="Van Aken S."/>
            <person name="Umayam L."/>
            <person name="Tallon L.J."/>
            <person name="Gill J.E."/>
            <person name="Adams M.D."/>
            <person name="Carrera A.J."/>
            <person name="Creasy T.H."/>
            <person name="Goodman H.M."/>
            <person name="Somerville C.R."/>
            <person name="Copenhaver G.P."/>
            <person name="Preuss D."/>
            <person name="Nierman W.C."/>
            <person name="White O."/>
            <person name="Eisen J.A."/>
            <person name="Salzberg S.L."/>
            <person name="Fraser C.M."/>
            <person name="Venter J.C."/>
        </authorList>
    </citation>
    <scope>NUCLEOTIDE SEQUENCE [LARGE SCALE GENOMIC DNA]</scope>
    <source>
        <strain>cv. Columbia</strain>
    </source>
</reference>
<reference key="2">
    <citation type="journal article" date="2017" name="Plant J.">
        <title>Araport11: a complete reannotation of the Arabidopsis thaliana reference genome.</title>
        <authorList>
            <person name="Cheng C.Y."/>
            <person name="Krishnakumar V."/>
            <person name="Chan A.P."/>
            <person name="Thibaud-Nissen F."/>
            <person name="Schobel S."/>
            <person name="Town C.D."/>
        </authorList>
    </citation>
    <scope>GENOME REANNOTATION</scope>
    <source>
        <strain>cv. Columbia</strain>
    </source>
</reference>
<reference key="3">
    <citation type="journal article" date="2003" name="Science">
        <title>Empirical analysis of transcriptional activity in the Arabidopsis genome.</title>
        <authorList>
            <person name="Yamada K."/>
            <person name="Lim J."/>
            <person name="Dale J.M."/>
            <person name="Chen H."/>
            <person name="Shinn P."/>
            <person name="Palm C.J."/>
            <person name="Southwick A.M."/>
            <person name="Wu H.C."/>
            <person name="Kim C.J."/>
            <person name="Nguyen M."/>
            <person name="Pham P.K."/>
            <person name="Cheuk R.F."/>
            <person name="Karlin-Newmann G."/>
            <person name="Liu S.X."/>
            <person name="Lam B."/>
            <person name="Sakano H."/>
            <person name="Wu T."/>
            <person name="Yu G."/>
            <person name="Miranda M."/>
            <person name="Quach H.L."/>
            <person name="Tripp M."/>
            <person name="Chang C.H."/>
            <person name="Lee J.M."/>
            <person name="Toriumi M.J."/>
            <person name="Chan M.M."/>
            <person name="Tang C.C."/>
            <person name="Onodera C.S."/>
            <person name="Deng J.M."/>
            <person name="Akiyama K."/>
            <person name="Ansari Y."/>
            <person name="Arakawa T."/>
            <person name="Banh J."/>
            <person name="Banno F."/>
            <person name="Bowser L."/>
            <person name="Brooks S.Y."/>
            <person name="Carninci P."/>
            <person name="Chao Q."/>
            <person name="Choy N."/>
            <person name="Enju A."/>
            <person name="Goldsmith A.D."/>
            <person name="Gurjal M."/>
            <person name="Hansen N.F."/>
            <person name="Hayashizaki Y."/>
            <person name="Johnson-Hopson C."/>
            <person name="Hsuan V.W."/>
            <person name="Iida K."/>
            <person name="Karnes M."/>
            <person name="Khan S."/>
            <person name="Koesema E."/>
            <person name="Ishida J."/>
            <person name="Jiang P.X."/>
            <person name="Jones T."/>
            <person name="Kawai J."/>
            <person name="Kamiya A."/>
            <person name="Meyers C."/>
            <person name="Nakajima M."/>
            <person name="Narusaka M."/>
            <person name="Seki M."/>
            <person name="Sakurai T."/>
            <person name="Satou M."/>
            <person name="Tamse R."/>
            <person name="Vaysberg M."/>
            <person name="Wallender E.K."/>
            <person name="Wong C."/>
            <person name="Yamamura Y."/>
            <person name="Yuan S."/>
            <person name="Shinozaki K."/>
            <person name="Davis R.W."/>
            <person name="Theologis A."/>
            <person name="Ecker J.R."/>
        </authorList>
    </citation>
    <scope>NUCLEOTIDE SEQUENCE [LARGE SCALE MRNA]</scope>
    <source>
        <strain>cv. Columbia</strain>
    </source>
</reference>
<reference key="4">
    <citation type="journal article" date="2003" name="Plant Physiol.">
        <title>The putative Arabidopsis arp2/3 complex controls leaf cell morphogenesis.</title>
        <authorList>
            <person name="Li S."/>
            <person name="Blanchoin L."/>
            <person name="Yang Z."/>
            <person name="Lord E.M."/>
        </authorList>
    </citation>
    <scope>TISSUE SPECIFICITY</scope>
    <scope>IDENTIFICATION OF THE ARP2/3 COMPLEX</scope>
</reference>
<reference key="5">
    <citation type="journal article" date="2005" name="Curr. Opin. Plant Biol.">
        <title>Breaking the WAVE complex: the point of Arabidopsis trichomes.</title>
        <authorList>
            <person name="Szymanski D.B."/>
        </authorList>
    </citation>
    <scope>REVIEW</scope>
</reference>
<gene>
    <name type="primary">ARPC1B</name>
    <name type="ordered locus">At2g31300</name>
    <name type="ORF">F16D14.14</name>
</gene>
<dbReference type="EMBL" id="AC006593">
    <property type="protein sequence ID" value="AAD20675.1"/>
    <property type="molecule type" value="Genomic_DNA"/>
</dbReference>
<dbReference type="EMBL" id="CP002685">
    <property type="protein sequence ID" value="AEC08524.1"/>
    <property type="molecule type" value="Genomic_DNA"/>
</dbReference>
<dbReference type="EMBL" id="AF439845">
    <property type="protein sequence ID" value="AAL27513.1"/>
    <property type="molecule type" value="mRNA"/>
</dbReference>
<dbReference type="EMBL" id="BT000567">
    <property type="protein sequence ID" value="AAN18136.1"/>
    <property type="molecule type" value="mRNA"/>
</dbReference>
<dbReference type="PIR" id="A84719">
    <property type="entry name" value="A84719"/>
</dbReference>
<dbReference type="RefSeq" id="NP_180688.1">
    <property type="nucleotide sequence ID" value="NM_128686.3"/>
</dbReference>
<dbReference type="SMR" id="Q9SJW6"/>
<dbReference type="FunCoup" id="Q9SJW6">
    <property type="interactions" value="3849"/>
</dbReference>
<dbReference type="IntAct" id="Q9SJW6">
    <property type="interactions" value="1"/>
</dbReference>
<dbReference type="STRING" id="3702.Q9SJW6"/>
<dbReference type="PaxDb" id="3702-AT2G31300.1"/>
<dbReference type="ProteomicsDB" id="246981"/>
<dbReference type="EnsemblPlants" id="AT2G31300.1">
    <property type="protein sequence ID" value="AT2G31300.1"/>
    <property type="gene ID" value="AT2G31300"/>
</dbReference>
<dbReference type="GeneID" id="817687"/>
<dbReference type="Gramene" id="AT2G31300.1">
    <property type="protein sequence ID" value="AT2G31300.1"/>
    <property type="gene ID" value="AT2G31300"/>
</dbReference>
<dbReference type="KEGG" id="ath:AT2G31300"/>
<dbReference type="Araport" id="AT2G31300"/>
<dbReference type="TAIR" id="AT2G31300">
    <property type="gene designation" value="ARPC1B"/>
</dbReference>
<dbReference type="eggNOG" id="KOG1523">
    <property type="taxonomic scope" value="Eukaryota"/>
</dbReference>
<dbReference type="HOGENOM" id="CLU_034396_0_0_1"/>
<dbReference type="InParanoid" id="Q9SJW6"/>
<dbReference type="OMA" id="IWDVKVT"/>
<dbReference type="PhylomeDB" id="Q9SJW6"/>
<dbReference type="PRO" id="PR:Q9SJW6"/>
<dbReference type="Proteomes" id="UP000006548">
    <property type="component" value="Chromosome 2"/>
</dbReference>
<dbReference type="ExpressionAtlas" id="Q9SJW6">
    <property type="expression patterns" value="baseline and differential"/>
</dbReference>
<dbReference type="GO" id="GO:0005885">
    <property type="term" value="C:Arp2/3 protein complex"/>
    <property type="evidence" value="ECO:0000304"/>
    <property type="project" value="TAIR"/>
</dbReference>
<dbReference type="GO" id="GO:0005737">
    <property type="term" value="C:cytoplasm"/>
    <property type="evidence" value="ECO:0007005"/>
    <property type="project" value="TAIR"/>
</dbReference>
<dbReference type="GO" id="GO:0005634">
    <property type="term" value="C:nucleus"/>
    <property type="evidence" value="ECO:0007005"/>
    <property type="project" value="TAIR"/>
</dbReference>
<dbReference type="GO" id="GO:0003779">
    <property type="term" value="F:actin binding"/>
    <property type="evidence" value="ECO:0007669"/>
    <property type="project" value="UniProtKB-KW"/>
</dbReference>
<dbReference type="GO" id="GO:0007015">
    <property type="term" value="P:actin filament organization"/>
    <property type="evidence" value="ECO:0000304"/>
    <property type="project" value="TAIR"/>
</dbReference>
<dbReference type="GO" id="GO:0034314">
    <property type="term" value="P:Arp2/3 complex-mediated actin nucleation"/>
    <property type="evidence" value="ECO:0007669"/>
    <property type="project" value="InterPro"/>
</dbReference>
<dbReference type="FunFam" id="2.130.10.10:FF:000331">
    <property type="entry name" value="Actin-related protein 2/3 complex subunit"/>
    <property type="match status" value="1"/>
</dbReference>
<dbReference type="Gene3D" id="2.130.10.10">
    <property type="entry name" value="YVTN repeat-like/Quinoprotein amine dehydrogenase"/>
    <property type="match status" value="1"/>
</dbReference>
<dbReference type="InterPro" id="IPR017383">
    <property type="entry name" value="ARPC1"/>
</dbReference>
<dbReference type="InterPro" id="IPR015943">
    <property type="entry name" value="WD40/YVTN_repeat-like_dom_sf"/>
</dbReference>
<dbReference type="InterPro" id="IPR036322">
    <property type="entry name" value="WD40_repeat_dom_sf"/>
</dbReference>
<dbReference type="InterPro" id="IPR001680">
    <property type="entry name" value="WD40_rpt"/>
</dbReference>
<dbReference type="PANTHER" id="PTHR10709">
    <property type="entry name" value="ACTIN-RELATED PROTEIN 2/3 COMPLEX SUBUNIT 1"/>
    <property type="match status" value="1"/>
</dbReference>
<dbReference type="PANTHER" id="PTHR10709:SF2">
    <property type="entry name" value="ACTIN-RELATED PROTEIN 2_3 COMPLEX SUBUNIT"/>
    <property type="match status" value="1"/>
</dbReference>
<dbReference type="Pfam" id="PF00400">
    <property type="entry name" value="WD40"/>
    <property type="match status" value="2"/>
</dbReference>
<dbReference type="PIRSF" id="PIRSF038093">
    <property type="entry name" value="ARP2/3_su1"/>
    <property type="match status" value="1"/>
</dbReference>
<dbReference type="SMART" id="SM00320">
    <property type="entry name" value="WD40"/>
    <property type="match status" value="5"/>
</dbReference>
<dbReference type="SUPFAM" id="SSF50978">
    <property type="entry name" value="WD40 repeat-like"/>
    <property type="match status" value="1"/>
</dbReference>
<dbReference type="PROSITE" id="PS50082">
    <property type="entry name" value="WD_REPEATS_2"/>
    <property type="match status" value="2"/>
</dbReference>
<dbReference type="PROSITE" id="PS50294">
    <property type="entry name" value="WD_REPEATS_REGION"/>
    <property type="match status" value="1"/>
</dbReference>
<proteinExistence type="evidence at transcript level"/>
<sequence length="378" mass="41819">MAVVDVHRFAESITCHAWSPDLSMVALCPNNTEVHIYKSLSQDHWERLHVLQKHDQIVSGIDWSSKSNKIVTVSHDRNSYVWSLEGAEWVPTLVILRLNRAALCVQWSPKENKFAVGSGAKTVCICYYEQENNWWVSKLIRKRHESSVTSVAWHPNNVLLATTSTDGKCRVFSTFIKGVDTKDSKAGSPAETKFGEQILQLDLSYSWAFGVKWSPSGNTLAYVGHSSMIYFVDDVGPSPLAQSVAFRDLPLRDVLFISEKMVIGVGYDSNPMVFAADDTGIWSFIRYIGEKKAASSGSSYSSQFSEAFGKFYGSQSKSTTANDASDSRGGVHDNSITSIVPLGKGGSPKVMRFSTSGLDGKIAIWDLENMQQELGNQF</sequence>
<accession>Q9SJW6</accession>